<comment type="function">
    <text evidence="1">May protect the nitrogenase Fe-Mo protein from oxidative damage.</text>
</comment>
<comment type="subunit">
    <text evidence="1">Homotrimer; associates with NifD.</text>
</comment>
<comment type="similarity">
    <text evidence="1">Belongs to the NifW family.</text>
</comment>
<proteinExistence type="inferred from homology"/>
<evidence type="ECO:0000255" key="1">
    <source>
        <dbReference type="HAMAP-Rule" id="MF_00529"/>
    </source>
</evidence>
<keyword id="KW-0535">Nitrogen fixation</keyword>
<feature type="chain" id="PRO_0000265750" description="Nitrogenase-stabilizing/protective protein NifW">
    <location>
        <begin position="1"/>
        <end position="113"/>
    </location>
</feature>
<gene>
    <name evidence="1" type="primary">nifW</name>
    <name type="ordered locus">Daro_1395</name>
</gene>
<reference key="1">
    <citation type="journal article" date="2009" name="BMC Genomics">
        <title>Metabolic analysis of the soil microbe Dechloromonas aromatica str. RCB: indications of a surprisingly complex life-style and cryptic anaerobic pathways for aromatic degradation.</title>
        <authorList>
            <person name="Salinero K.K."/>
            <person name="Keller K."/>
            <person name="Feil W.S."/>
            <person name="Feil H."/>
            <person name="Trong S."/>
            <person name="Di Bartolo G."/>
            <person name="Lapidus A."/>
        </authorList>
    </citation>
    <scope>NUCLEOTIDE SEQUENCE [LARGE SCALE GENOMIC DNA]</scope>
    <source>
        <strain>RCB</strain>
    </source>
</reference>
<organism>
    <name type="scientific">Dechloromonas aromatica (strain RCB)</name>
    <dbReference type="NCBI Taxonomy" id="159087"/>
    <lineage>
        <taxon>Bacteria</taxon>
        <taxon>Pseudomonadati</taxon>
        <taxon>Pseudomonadota</taxon>
        <taxon>Betaproteobacteria</taxon>
        <taxon>Rhodocyclales</taxon>
        <taxon>Azonexaceae</taxon>
        <taxon>Dechloromonas</taxon>
    </lineage>
</organism>
<name>NIFW_DECAR</name>
<dbReference type="EMBL" id="CP000089">
    <property type="protein sequence ID" value="AAZ46144.1"/>
    <property type="molecule type" value="Genomic_DNA"/>
</dbReference>
<dbReference type="SMR" id="Q47G87"/>
<dbReference type="STRING" id="159087.Daro_1395"/>
<dbReference type="KEGG" id="dar:Daro_1395"/>
<dbReference type="eggNOG" id="ENOG50330W8">
    <property type="taxonomic scope" value="Bacteria"/>
</dbReference>
<dbReference type="HOGENOM" id="CLU_145318_1_0_4"/>
<dbReference type="OrthoDB" id="9811868at2"/>
<dbReference type="GO" id="GO:0009399">
    <property type="term" value="P:nitrogen fixation"/>
    <property type="evidence" value="ECO:0007669"/>
    <property type="project" value="UniProtKB-UniRule"/>
</dbReference>
<dbReference type="HAMAP" id="MF_00529">
    <property type="entry name" value="NifW"/>
    <property type="match status" value="1"/>
</dbReference>
<dbReference type="InterPro" id="IPR004893">
    <property type="entry name" value="NifW"/>
</dbReference>
<dbReference type="Pfam" id="PF03206">
    <property type="entry name" value="NifW"/>
    <property type="match status" value="1"/>
</dbReference>
<dbReference type="PIRSF" id="PIRSF005790">
    <property type="entry name" value="NifW"/>
    <property type="match status" value="1"/>
</dbReference>
<protein>
    <recommendedName>
        <fullName evidence="1">Nitrogenase-stabilizing/protective protein NifW</fullName>
    </recommendedName>
</protein>
<sequence>MEDTLSLAEAMEDLVSAEDFLDYFAVPYDPAVVHVNRLHILQRFHDYLAKQAPNLPPEESQQRGIYRLWLERAYQDFVTSDSLTEKVFAVFQTVSKPDGGMSSFVSLDKVFRQ</sequence>
<accession>Q47G87</accession>